<sequence>MDTREAVHAAARRARTASRVLALLTTAQKDAALHAAADAVLAASADILAANAADIETARASGTEDSLLDRLRLTPERIEGIASGLRQVAGLPDPVGEVVRGSTLPNGLELRQLRVPLGVVGMVYEARPNVTVDAFGLALKSGNAALLRGSSSAAKSNAALVVALRTSLAAQQLPEDAVQLLPSDDRSSVTHLIQARGLVDVVIPRGGAGLISAVVRDATVPTIETGVGNCHVYVHSAADLEMAERILLNSKTRRPSVCNTAETVLIDAAIAETAVPKLLQALQTHSVTVHGDLPGLVPATESDWSEEYLTLDVALKVVDDLNAAVEHIDRYGTGHTEAIVTSDLAAAREFTARVDAAAVMVNASTAFTDGEQFGFGAEIGISTQKLHARGPMGLPELTSTKWIVWGDGHTRPV</sequence>
<comment type="function">
    <text evidence="1">Catalyzes the NADPH-dependent reduction of L-glutamate 5-phosphate into L-glutamate 5-semialdehyde and phosphate. The product spontaneously undergoes cyclization to form 1-pyrroline-5-carboxylate.</text>
</comment>
<comment type="catalytic activity">
    <reaction evidence="1">
        <text>L-glutamate 5-semialdehyde + phosphate + NADP(+) = L-glutamyl 5-phosphate + NADPH + H(+)</text>
        <dbReference type="Rhea" id="RHEA:19541"/>
        <dbReference type="ChEBI" id="CHEBI:15378"/>
        <dbReference type="ChEBI" id="CHEBI:43474"/>
        <dbReference type="ChEBI" id="CHEBI:57783"/>
        <dbReference type="ChEBI" id="CHEBI:58066"/>
        <dbReference type="ChEBI" id="CHEBI:58274"/>
        <dbReference type="ChEBI" id="CHEBI:58349"/>
        <dbReference type="EC" id="1.2.1.41"/>
    </reaction>
</comment>
<comment type="pathway">
    <text evidence="1">Amino-acid biosynthesis; L-proline biosynthesis; L-glutamate 5-semialdehyde from L-glutamate: step 2/2.</text>
</comment>
<comment type="subcellular location">
    <subcellularLocation>
        <location evidence="1">Cytoplasm</location>
    </subcellularLocation>
</comment>
<comment type="similarity">
    <text evidence="1">Belongs to the gamma-glutamyl phosphate reductase family.</text>
</comment>
<proteinExistence type="inferred from homology"/>
<reference key="1">
    <citation type="journal article" date="2006" name="Proc. Natl. Acad. Sci. U.S.A.">
        <title>The complete genome of Rhodococcus sp. RHA1 provides insights into a catabolic powerhouse.</title>
        <authorList>
            <person name="McLeod M.P."/>
            <person name="Warren R.L."/>
            <person name="Hsiao W.W.L."/>
            <person name="Araki N."/>
            <person name="Myhre M."/>
            <person name="Fernandes C."/>
            <person name="Miyazawa D."/>
            <person name="Wong W."/>
            <person name="Lillquist A.L."/>
            <person name="Wang D."/>
            <person name="Dosanjh M."/>
            <person name="Hara H."/>
            <person name="Petrescu A."/>
            <person name="Morin R.D."/>
            <person name="Yang G."/>
            <person name="Stott J.M."/>
            <person name="Schein J.E."/>
            <person name="Shin H."/>
            <person name="Smailus D."/>
            <person name="Siddiqui A.S."/>
            <person name="Marra M.A."/>
            <person name="Jones S.J.M."/>
            <person name="Holt R."/>
            <person name="Brinkman F.S.L."/>
            <person name="Miyauchi K."/>
            <person name="Fukuda M."/>
            <person name="Davies J.E."/>
            <person name="Mohn W.W."/>
            <person name="Eltis L.D."/>
        </authorList>
    </citation>
    <scope>NUCLEOTIDE SEQUENCE [LARGE SCALE GENOMIC DNA]</scope>
    <source>
        <strain>RHA1</strain>
    </source>
</reference>
<organism>
    <name type="scientific">Rhodococcus jostii (strain RHA1)</name>
    <dbReference type="NCBI Taxonomy" id="101510"/>
    <lineage>
        <taxon>Bacteria</taxon>
        <taxon>Bacillati</taxon>
        <taxon>Actinomycetota</taxon>
        <taxon>Actinomycetes</taxon>
        <taxon>Mycobacteriales</taxon>
        <taxon>Nocardiaceae</taxon>
        <taxon>Rhodococcus</taxon>
    </lineage>
</organism>
<accession>Q0SH62</accession>
<keyword id="KW-0028">Amino-acid biosynthesis</keyword>
<keyword id="KW-0963">Cytoplasm</keyword>
<keyword id="KW-0521">NADP</keyword>
<keyword id="KW-0560">Oxidoreductase</keyword>
<keyword id="KW-0641">Proline biosynthesis</keyword>
<evidence type="ECO:0000255" key="1">
    <source>
        <dbReference type="HAMAP-Rule" id="MF_00412"/>
    </source>
</evidence>
<feature type="chain" id="PRO_0000252586" description="Gamma-glutamyl phosphate reductase">
    <location>
        <begin position="1"/>
        <end position="413"/>
    </location>
</feature>
<gene>
    <name evidence="1" type="primary">proA</name>
    <name type="ordered locus">RHA1_ro01300</name>
</gene>
<protein>
    <recommendedName>
        <fullName evidence="1">Gamma-glutamyl phosphate reductase</fullName>
        <shortName evidence="1">GPR</shortName>
        <ecNumber evidence="1">1.2.1.41</ecNumber>
    </recommendedName>
    <alternativeName>
        <fullName evidence="1">Glutamate-5-semialdehyde dehydrogenase</fullName>
    </alternativeName>
    <alternativeName>
        <fullName evidence="1">Glutamyl-gamma-semialdehyde dehydrogenase</fullName>
        <shortName evidence="1">GSA dehydrogenase</shortName>
    </alternativeName>
</protein>
<dbReference type="EC" id="1.2.1.41" evidence="1"/>
<dbReference type="EMBL" id="CP000431">
    <property type="protein sequence ID" value="ABG93124.1"/>
    <property type="molecule type" value="Genomic_DNA"/>
</dbReference>
<dbReference type="SMR" id="Q0SH62"/>
<dbReference type="KEGG" id="rha:RHA1_ro01300"/>
<dbReference type="eggNOG" id="COG0014">
    <property type="taxonomic scope" value="Bacteria"/>
</dbReference>
<dbReference type="HOGENOM" id="CLU_030231_0_0_11"/>
<dbReference type="UniPathway" id="UPA00098">
    <property type="reaction ID" value="UER00360"/>
</dbReference>
<dbReference type="Proteomes" id="UP000008710">
    <property type="component" value="Chromosome"/>
</dbReference>
<dbReference type="GO" id="GO:0005737">
    <property type="term" value="C:cytoplasm"/>
    <property type="evidence" value="ECO:0007669"/>
    <property type="project" value="UniProtKB-SubCell"/>
</dbReference>
<dbReference type="GO" id="GO:0004350">
    <property type="term" value="F:glutamate-5-semialdehyde dehydrogenase activity"/>
    <property type="evidence" value="ECO:0007669"/>
    <property type="project" value="UniProtKB-UniRule"/>
</dbReference>
<dbReference type="GO" id="GO:0050661">
    <property type="term" value="F:NADP binding"/>
    <property type="evidence" value="ECO:0007669"/>
    <property type="project" value="InterPro"/>
</dbReference>
<dbReference type="GO" id="GO:0055129">
    <property type="term" value="P:L-proline biosynthetic process"/>
    <property type="evidence" value="ECO:0007669"/>
    <property type="project" value="UniProtKB-UniRule"/>
</dbReference>
<dbReference type="CDD" id="cd07079">
    <property type="entry name" value="ALDH_F18-19_ProA-GPR"/>
    <property type="match status" value="1"/>
</dbReference>
<dbReference type="FunFam" id="3.40.309.10:FF:000006">
    <property type="entry name" value="Gamma-glutamyl phosphate reductase"/>
    <property type="match status" value="1"/>
</dbReference>
<dbReference type="Gene3D" id="3.40.605.10">
    <property type="entry name" value="Aldehyde Dehydrogenase, Chain A, domain 1"/>
    <property type="match status" value="1"/>
</dbReference>
<dbReference type="Gene3D" id="3.40.309.10">
    <property type="entry name" value="Aldehyde Dehydrogenase, Chain A, domain 2"/>
    <property type="match status" value="1"/>
</dbReference>
<dbReference type="HAMAP" id="MF_00412">
    <property type="entry name" value="ProA"/>
    <property type="match status" value="1"/>
</dbReference>
<dbReference type="InterPro" id="IPR016161">
    <property type="entry name" value="Ald_DH/histidinol_DH"/>
</dbReference>
<dbReference type="InterPro" id="IPR016163">
    <property type="entry name" value="Ald_DH_C"/>
</dbReference>
<dbReference type="InterPro" id="IPR016162">
    <property type="entry name" value="Ald_DH_N"/>
</dbReference>
<dbReference type="InterPro" id="IPR015590">
    <property type="entry name" value="Aldehyde_DH_dom"/>
</dbReference>
<dbReference type="InterPro" id="IPR020593">
    <property type="entry name" value="G-glutamylP_reductase_CS"/>
</dbReference>
<dbReference type="InterPro" id="IPR012134">
    <property type="entry name" value="Glu-5-SA_DH"/>
</dbReference>
<dbReference type="InterPro" id="IPR000965">
    <property type="entry name" value="GPR_dom"/>
</dbReference>
<dbReference type="NCBIfam" id="NF001221">
    <property type="entry name" value="PRK00197.1"/>
    <property type="match status" value="1"/>
</dbReference>
<dbReference type="NCBIfam" id="TIGR00407">
    <property type="entry name" value="proA"/>
    <property type="match status" value="1"/>
</dbReference>
<dbReference type="PANTHER" id="PTHR11063:SF8">
    <property type="entry name" value="DELTA-1-PYRROLINE-5-CARBOXYLATE SYNTHASE"/>
    <property type="match status" value="1"/>
</dbReference>
<dbReference type="PANTHER" id="PTHR11063">
    <property type="entry name" value="GLUTAMATE SEMIALDEHYDE DEHYDROGENASE"/>
    <property type="match status" value="1"/>
</dbReference>
<dbReference type="Pfam" id="PF00171">
    <property type="entry name" value="Aldedh"/>
    <property type="match status" value="1"/>
</dbReference>
<dbReference type="PIRSF" id="PIRSF000151">
    <property type="entry name" value="GPR"/>
    <property type="match status" value="1"/>
</dbReference>
<dbReference type="SUPFAM" id="SSF53720">
    <property type="entry name" value="ALDH-like"/>
    <property type="match status" value="1"/>
</dbReference>
<dbReference type="PROSITE" id="PS01223">
    <property type="entry name" value="PROA"/>
    <property type="match status" value="1"/>
</dbReference>
<name>PROA_RHOJR</name>